<gene>
    <name evidence="1" type="primary">atpA</name>
    <name type="ordered locus">SeSA_A4077</name>
</gene>
<feature type="chain" id="PRO_1000143435" description="ATP synthase subunit alpha">
    <location>
        <begin position="1"/>
        <end position="513"/>
    </location>
</feature>
<feature type="binding site" evidence="1">
    <location>
        <begin position="169"/>
        <end position="176"/>
    </location>
    <ligand>
        <name>ATP</name>
        <dbReference type="ChEBI" id="CHEBI:30616"/>
    </ligand>
</feature>
<feature type="site" description="Required for activity" evidence="1">
    <location>
        <position position="373"/>
    </location>
</feature>
<keyword id="KW-0066">ATP synthesis</keyword>
<keyword id="KW-0067">ATP-binding</keyword>
<keyword id="KW-0997">Cell inner membrane</keyword>
<keyword id="KW-1003">Cell membrane</keyword>
<keyword id="KW-0139">CF(1)</keyword>
<keyword id="KW-0375">Hydrogen ion transport</keyword>
<keyword id="KW-0406">Ion transport</keyword>
<keyword id="KW-0472">Membrane</keyword>
<keyword id="KW-0547">Nucleotide-binding</keyword>
<keyword id="KW-1278">Translocase</keyword>
<keyword id="KW-0813">Transport</keyword>
<reference key="1">
    <citation type="journal article" date="2011" name="J. Bacteriol.">
        <title>Comparative genomics of 28 Salmonella enterica isolates: evidence for CRISPR-mediated adaptive sublineage evolution.</title>
        <authorList>
            <person name="Fricke W.F."/>
            <person name="Mammel M.K."/>
            <person name="McDermott P.F."/>
            <person name="Tartera C."/>
            <person name="White D.G."/>
            <person name="Leclerc J.E."/>
            <person name="Ravel J."/>
            <person name="Cebula T.A."/>
        </authorList>
    </citation>
    <scope>NUCLEOTIDE SEQUENCE [LARGE SCALE GENOMIC DNA]</scope>
    <source>
        <strain>CVM19633</strain>
    </source>
</reference>
<dbReference type="EC" id="7.1.2.2" evidence="1"/>
<dbReference type="EMBL" id="CP001127">
    <property type="protein sequence ID" value="ACF90605.1"/>
    <property type="molecule type" value="Genomic_DNA"/>
</dbReference>
<dbReference type="RefSeq" id="WP_001176751.1">
    <property type="nucleotide sequence ID" value="NC_011094.1"/>
</dbReference>
<dbReference type="SMR" id="B4TN33"/>
<dbReference type="GeneID" id="66758156"/>
<dbReference type="KEGG" id="sew:SeSA_A4077"/>
<dbReference type="HOGENOM" id="CLU_010091_2_1_6"/>
<dbReference type="Proteomes" id="UP000001865">
    <property type="component" value="Chromosome"/>
</dbReference>
<dbReference type="GO" id="GO:0005886">
    <property type="term" value="C:plasma membrane"/>
    <property type="evidence" value="ECO:0007669"/>
    <property type="project" value="UniProtKB-SubCell"/>
</dbReference>
<dbReference type="GO" id="GO:0045259">
    <property type="term" value="C:proton-transporting ATP synthase complex"/>
    <property type="evidence" value="ECO:0007669"/>
    <property type="project" value="UniProtKB-KW"/>
</dbReference>
<dbReference type="GO" id="GO:0043531">
    <property type="term" value="F:ADP binding"/>
    <property type="evidence" value="ECO:0007669"/>
    <property type="project" value="TreeGrafter"/>
</dbReference>
<dbReference type="GO" id="GO:0005524">
    <property type="term" value="F:ATP binding"/>
    <property type="evidence" value="ECO:0007669"/>
    <property type="project" value="UniProtKB-UniRule"/>
</dbReference>
<dbReference type="GO" id="GO:0046933">
    <property type="term" value="F:proton-transporting ATP synthase activity, rotational mechanism"/>
    <property type="evidence" value="ECO:0007669"/>
    <property type="project" value="UniProtKB-UniRule"/>
</dbReference>
<dbReference type="CDD" id="cd18113">
    <property type="entry name" value="ATP-synt_F1_alpha_C"/>
    <property type="match status" value="1"/>
</dbReference>
<dbReference type="CDD" id="cd18116">
    <property type="entry name" value="ATP-synt_F1_alpha_N"/>
    <property type="match status" value="1"/>
</dbReference>
<dbReference type="CDD" id="cd01132">
    <property type="entry name" value="F1-ATPase_alpha_CD"/>
    <property type="match status" value="1"/>
</dbReference>
<dbReference type="FunFam" id="1.20.150.20:FF:000001">
    <property type="entry name" value="ATP synthase subunit alpha"/>
    <property type="match status" value="1"/>
</dbReference>
<dbReference type="FunFam" id="2.40.30.20:FF:000001">
    <property type="entry name" value="ATP synthase subunit alpha"/>
    <property type="match status" value="1"/>
</dbReference>
<dbReference type="FunFam" id="3.40.50.300:FF:000002">
    <property type="entry name" value="ATP synthase subunit alpha"/>
    <property type="match status" value="1"/>
</dbReference>
<dbReference type="Gene3D" id="2.40.30.20">
    <property type="match status" value="1"/>
</dbReference>
<dbReference type="Gene3D" id="1.20.150.20">
    <property type="entry name" value="ATP synthase alpha/beta chain, C-terminal domain"/>
    <property type="match status" value="1"/>
</dbReference>
<dbReference type="Gene3D" id="3.40.50.300">
    <property type="entry name" value="P-loop containing nucleotide triphosphate hydrolases"/>
    <property type="match status" value="1"/>
</dbReference>
<dbReference type="HAMAP" id="MF_01346">
    <property type="entry name" value="ATP_synth_alpha_bact"/>
    <property type="match status" value="1"/>
</dbReference>
<dbReference type="InterPro" id="IPR023366">
    <property type="entry name" value="ATP_synth_asu-like_sf"/>
</dbReference>
<dbReference type="InterPro" id="IPR000793">
    <property type="entry name" value="ATP_synth_asu_C"/>
</dbReference>
<dbReference type="InterPro" id="IPR038376">
    <property type="entry name" value="ATP_synth_asu_C_sf"/>
</dbReference>
<dbReference type="InterPro" id="IPR033732">
    <property type="entry name" value="ATP_synth_F1_a_nt-bd_dom"/>
</dbReference>
<dbReference type="InterPro" id="IPR005294">
    <property type="entry name" value="ATP_synth_F1_asu"/>
</dbReference>
<dbReference type="InterPro" id="IPR020003">
    <property type="entry name" value="ATPase_a/bsu_AS"/>
</dbReference>
<dbReference type="InterPro" id="IPR004100">
    <property type="entry name" value="ATPase_F1/V1/A1_a/bsu_N"/>
</dbReference>
<dbReference type="InterPro" id="IPR036121">
    <property type="entry name" value="ATPase_F1/V1/A1_a/bsu_N_sf"/>
</dbReference>
<dbReference type="InterPro" id="IPR000194">
    <property type="entry name" value="ATPase_F1/V1/A1_a/bsu_nucl-bd"/>
</dbReference>
<dbReference type="InterPro" id="IPR027417">
    <property type="entry name" value="P-loop_NTPase"/>
</dbReference>
<dbReference type="NCBIfam" id="TIGR00962">
    <property type="entry name" value="atpA"/>
    <property type="match status" value="1"/>
</dbReference>
<dbReference type="NCBIfam" id="NF009884">
    <property type="entry name" value="PRK13343.1"/>
    <property type="match status" value="1"/>
</dbReference>
<dbReference type="PANTHER" id="PTHR48082">
    <property type="entry name" value="ATP SYNTHASE SUBUNIT ALPHA, MITOCHONDRIAL"/>
    <property type="match status" value="1"/>
</dbReference>
<dbReference type="PANTHER" id="PTHR48082:SF2">
    <property type="entry name" value="ATP SYNTHASE SUBUNIT ALPHA, MITOCHONDRIAL"/>
    <property type="match status" value="1"/>
</dbReference>
<dbReference type="Pfam" id="PF00006">
    <property type="entry name" value="ATP-synt_ab"/>
    <property type="match status" value="1"/>
</dbReference>
<dbReference type="Pfam" id="PF00306">
    <property type="entry name" value="ATP-synt_ab_C"/>
    <property type="match status" value="1"/>
</dbReference>
<dbReference type="Pfam" id="PF02874">
    <property type="entry name" value="ATP-synt_ab_N"/>
    <property type="match status" value="1"/>
</dbReference>
<dbReference type="SUPFAM" id="SSF47917">
    <property type="entry name" value="C-terminal domain of alpha and beta subunits of F1 ATP synthase"/>
    <property type="match status" value="1"/>
</dbReference>
<dbReference type="SUPFAM" id="SSF50615">
    <property type="entry name" value="N-terminal domain of alpha and beta subunits of F1 ATP synthase"/>
    <property type="match status" value="1"/>
</dbReference>
<dbReference type="SUPFAM" id="SSF52540">
    <property type="entry name" value="P-loop containing nucleoside triphosphate hydrolases"/>
    <property type="match status" value="1"/>
</dbReference>
<dbReference type="PROSITE" id="PS00152">
    <property type="entry name" value="ATPASE_ALPHA_BETA"/>
    <property type="match status" value="1"/>
</dbReference>
<accession>B4TN33</accession>
<comment type="function">
    <text evidence="1">Produces ATP from ADP in the presence of a proton gradient across the membrane. The alpha chain is a regulatory subunit.</text>
</comment>
<comment type="catalytic activity">
    <reaction evidence="1">
        <text>ATP + H2O + 4 H(+)(in) = ADP + phosphate + 5 H(+)(out)</text>
        <dbReference type="Rhea" id="RHEA:57720"/>
        <dbReference type="ChEBI" id="CHEBI:15377"/>
        <dbReference type="ChEBI" id="CHEBI:15378"/>
        <dbReference type="ChEBI" id="CHEBI:30616"/>
        <dbReference type="ChEBI" id="CHEBI:43474"/>
        <dbReference type="ChEBI" id="CHEBI:456216"/>
        <dbReference type="EC" id="7.1.2.2"/>
    </reaction>
</comment>
<comment type="subunit">
    <text evidence="1">F-type ATPases have 2 components, CF(1) - the catalytic core - and CF(0) - the membrane proton channel. CF(1) has five subunits: alpha(3), beta(3), gamma(1), delta(1), epsilon(1). CF(0) has three main subunits: a(1), b(2) and c(9-12). The alpha and beta chains form an alternating ring which encloses part of the gamma chain. CF(1) is attached to CF(0) by a central stalk formed by the gamma and epsilon chains, while a peripheral stalk is formed by the delta and b chains.</text>
</comment>
<comment type="subcellular location">
    <subcellularLocation>
        <location evidence="1">Cell inner membrane</location>
        <topology evidence="1">Peripheral membrane protein</topology>
    </subcellularLocation>
</comment>
<comment type="similarity">
    <text evidence="1">Belongs to the ATPase alpha/beta chains family.</text>
</comment>
<evidence type="ECO:0000255" key="1">
    <source>
        <dbReference type="HAMAP-Rule" id="MF_01346"/>
    </source>
</evidence>
<proteinExistence type="inferred from homology"/>
<protein>
    <recommendedName>
        <fullName evidence="1">ATP synthase subunit alpha</fullName>
        <ecNumber evidence="1">7.1.2.2</ecNumber>
    </recommendedName>
    <alternativeName>
        <fullName evidence="1">ATP synthase F1 sector subunit alpha</fullName>
    </alternativeName>
    <alternativeName>
        <fullName evidence="1">F-ATPase subunit alpha</fullName>
    </alternativeName>
</protein>
<sequence>MQLNSTEISELIKQRIAQFNVVSEAHNEGTIVSVSDGVIRIHGLADCMQGEMISLPGNRYAIALNLERDSVGAVVMGPYADLAEGMKVKCTGRILEVPVGRGLLGRVVNTLGAPIDGKGPVDNDGFSAVEAIAPGVIDRQSVDQPVQTGYKAVDSMIPIGRGQRELIIGDRQTGKTALAIDAIINQRDSGIKCIYVAIGQKASTISNVVRKLEEHGALANTIVVVATASESAALQYLAPYAGCAMGEYFRDRGEDALIIYDDLSKQAVAYRQISLLLRRPPGREAFPGDVFYLHSRLLERAARVNADYVEAFTKGEVKGKTGSLTALPIIETQAGDVSAFVPTNVISITDGQIFLESNLFNAGIRPAVNPGISVSRVGGAAQTKIMKKLSGGIRTALAQYRELAAFSQFASDLDDATRKQLDHGQKVTELLKQKQYAPMSVAQQSLVLFAAERGYLADVELAKIGSFEAALLAYVDRDHAPLMQEINQSGGYNDEIEGKLKGILDSFKATQSW</sequence>
<organism>
    <name type="scientific">Salmonella schwarzengrund (strain CVM19633)</name>
    <dbReference type="NCBI Taxonomy" id="439843"/>
    <lineage>
        <taxon>Bacteria</taxon>
        <taxon>Pseudomonadati</taxon>
        <taxon>Pseudomonadota</taxon>
        <taxon>Gammaproteobacteria</taxon>
        <taxon>Enterobacterales</taxon>
        <taxon>Enterobacteriaceae</taxon>
        <taxon>Salmonella</taxon>
    </lineage>
</organism>
<name>ATPA_SALSV</name>